<reference key="1">
    <citation type="submission" date="2005-07" db="EMBL/GenBank/DDBJ databases">
        <title>Complete sequence of Synechococcus sp. CC9605.</title>
        <authorList>
            <consortium name="US DOE Joint Genome Institute"/>
            <person name="Copeland A."/>
            <person name="Lucas S."/>
            <person name="Lapidus A."/>
            <person name="Barry K."/>
            <person name="Detter J.C."/>
            <person name="Glavina T."/>
            <person name="Hammon N."/>
            <person name="Israni S."/>
            <person name="Pitluck S."/>
            <person name="Schmutz J."/>
            <person name="Martinez M."/>
            <person name="Larimer F."/>
            <person name="Land M."/>
            <person name="Kyrpides N."/>
            <person name="Ivanova N."/>
            <person name="Richardson P."/>
        </authorList>
    </citation>
    <scope>NUCLEOTIDE SEQUENCE [LARGE SCALE GENOMIC DNA]</scope>
    <source>
        <strain>CC9605</strain>
    </source>
</reference>
<evidence type="ECO:0000255" key="1">
    <source>
        <dbReference type="HAMAP-Rule" id="MF_01342"/>
    </source>
</evidence>
<evidence type="ECO:0000305" key="2"/>
<proteinExistence type="inferred from homology"/>
<feature type="chain" id="PRO_0000251681" description="Large ribosomal subunit protein uL16">
    <location>
        <begin position="1"/>
        <end position="158"/>
    </location>
</feature>
<protein>
    <recommendedName>
        <fullName evidence="1">Large ribosomal subunit protein uL16</fullName>
    </recommendedName>
    <alternativeName>
        <fullName evidence="2">50S ribosomal protein L16</fullName>
    </alternativeName>
</protein>
<accession>Q3AMN7</accession>
<keyword id="KW-0687">Ribonucleoprotein</keyword>
<keyword id="KW-0689">Ribosomal protein</keyword>
<keyword id="KW-0694">RNA-binding</keyword>
<keyword id="KW-0699">rRNA-binding</keyword>
<keyword id="KW-0820">tRNA-binding</keyword>
<name>RL16_SYNSC</name>
<sequence>MLSPKRVKFRKQQRGRMRGVATRGNTIAFGQFALQAQECGWITSRQIEASRRAMTRYVKRGGKIWIRIFPDKPVTMRAAETRMGSGKGNPEFWVAVIKPGRILFEMGGDEITPEIAKEAMRLAQYKLPVKTKFIQLDEQEKSAGAKAPAASEAITVES</sequence>
<dbReference type="EMBL" id="CP000110">
    <property type="protein sequence ID" value="ABB34145.1"/>
    <property type="molecule type" value="Genomic_DNA"/>
</dbReference>
<dbReference type="RefSeq" id="WP_011363385.1">
    <property type="nucleotide sequence ID" value="NC_007516.1"/>
</dbReference>
<dbReference type="SMR" id="Q3AMN7"/>
<dbReference type="STRING" id="110662.Syncc9605_0369"/>
<dbReference type="KEGG" id="syd:Syncc9605_0369"/>
<dbReference type="eggNOG" id="COG0197">
    <property type="taxonomic scope" value="Bacteria"/>
</dbReference>
<dbReference type="HOGENOM" id="CLU_078858_2_1_3"/>
<dbReference type="OrthoDB" id="9802589at2"/>
<dbReference type="GO" id="GO:1990904">
    <property type="term" value="C:ribonucleoprotein complex"/>
    <property type="evidence" value="ECO:0007669"/>
    <property type="project" value="UniProtKB-KW"/>
</dbReference>
<dbReference type="GO" id="GO:0005840">
    <property type="term" value="C:ribosome"/>
    <property type="evidence" value="ECO:0007669"/>
    <property type="project" value="UniProtKB-KW"/>
</dbReference>
<dbReference type="GO" id="GO:0019843">
    <property type="term" value="F:rRNA binding"/>
    <property type="evidence" value="ECO:0007669"/>
    <property type="project" value="UniProtKB-UniRule"/>
</dbReference>
<dbReference type="GO" id="GO:0003735">
    <property type="term" value="F:structural constituent of ribosome"/>
    <property type="evidence" value="ECO:0007669"/>
    <property type="project" value="InterPro"/>
</dbReference>
<dbReference type="GO" id="GO:0000049">
    <property type="term" value="F:tRNA binding"/>
    <property type="evidence" value="ECO:0007669"/>
    <property type="project" value="UniProtKB-KW"/>
</dbReference>
<dbReference type="GO" id="GO:0006412">
    <property type="term" value="P:translation"/>
    <property type="evidence" value="ECO:0007669"/>
    <property type="project" value="UniProtKB-UniRule"/>
</dbReference>
<dbReference type="CDD" id="cd01433">
    <property type="entry name" value="Ribosomal_L16_L10e"/>
    <property type="match status" value="1"/>
</dbReference>
<dbReference type="FunFam" id="3.90.1170.10:FF:000001">
    <property type="entry name" value="50S ribosomal protein L16"/>
    <property type="match status" value="1"/>
</dbReference>
<dbReference type="Gene3D" id="3.90.1170.10">
    <property type="entry name" value="Ribosomal protein L10e/L16"/>
    <property type="match status" value="1"/>
</dbReference>
<dbReference type="HAMAP" id="MF_01342">
    <property type="entry name" value="Ribosomal_uL16"/>
    <property type="match status" value="1"/>
</dbReference>
<dbReference type="InterPro" id="IPR047873">
    <property type="entry name" value="Ribosomal_uL16"/>
</dbReference>
<dbReference type="InterPro" id="IPR000114">
    <property type="entry name" value="Ribosomal_uL16_bact-type"/>
</dbReference>
<dbReference type="InterPro" id="IPR020798">
    <property type="entry name" value="Ribosomal_uL16_CS"/>
</dbReference>
<dbReference type="InterPro" id="IPR016180">
    <property type="entry name" value="Ribosomal_uL16_dom"/>
</dbReference>
<dbReference type="InterPro" id="IPR036920">
    <property type="entry name" value="Ribosomal_uL16_sf"/>
</dbReference>
<dbReference type="NCBIfam" id="TIGR01164">
    <property type="entry name" value="rplP_bact"/>
    <property type="match status" value="1"/>
</dbReference>
<dbReference type="PANTHER" id="PTHR12220">
    <property type="entry name" value="50S/60S RIBOSOMAL PROTEIN L16"/>
    <property type="match status" value="1"/>
</dbReference>
<dbReference type="PANTHER" id="PTHR12220:SF13">
    <property type="entry name" value="LARGE RIBOSOMAL SUBUNIT PROTEIN UL16M"/>
    <property type="match status" value="1"/>
</dbReference>
<dbReference type="Pfam" id="PF00252">
    <property type="entry name" value="Ribosomal_L16"/>
    <property type="match status" value="1"/>
</dbReference>
<dbReference type="PRINTS" id="PR00060">
    <property type="entry name" value="RIBOSOMALL16"/>
</dbReference>
<dbReference type="SUPFAM" id="SSF54686">
    <property type="entry name" value="Ribosomal protein L16p/L10e"/>
    <property type="match status" value="1"/>
</dbReference>
<dbReference type="PROSITE" id="PS00586">
    <property type="entry name" value="RIBOSOMAL_L16_1"/>
    <property type="match status" value="1"/>
</dbReference>
<dbReference type="PROSITE" id="PS00701">
    <property type="entry name" value="RIBOSOMAL_L16_2"/>
    <property type="match status" value="1"/>
</dbReference>
<comment type="function">
    <text evidence="1">Binds 23S rRNA and is also seen to make contacts with the A and possibly P site tRNAs.</text>
</comment>
<comment type="subunit">
    <text evidence="1">Part of the 50S ribosomal subunit.</text>
</comment>
<comment type="similarity">
    <text evidence="1">Belongs to the universal ribosomal protein uL16 family.</text>
</comment>
<gene>
    <name evidence="1" type="primary">rplP</name>
    <name evidence="1" type="synonym">rpl16</name>
    <name type="ordered locus">Syncc9605_0369</name>
</gene>
<organism>
    <name type="scientific">Synechococcus sp. (strain CC9605)</name>
    <dbReference type="NCBI Taxonomy" id="110662"/>
    <lineage>
        <taxon>Bacteria</taxon>
        <taxon>Bacillati</taxon>
        <taxon>Cyanobacteriota</taxon>
        <taxon>Cyanophyceae</taxon>
        <taxon>Synechococcales</taxon>
        <taxon>Synechococcaceae</taxon>
        <taxon>Synechococcus</taxon>
    </lineage>
</organism>